<reference key="1">
    <citation type="journal article" date="2002" name="Nature">
        <title>The genome sequence of Schizosaccharomyces pombe.</title>
        <authorList>
            <person name="Wood V."/>
            <person name="Gwilliam R."/>
            <person name="Rajandream M.A."/>
            <person name="Lyne M.H."/>
            <person name="Lyne R."/>
            <person name="Stewart A."/>
            <person name="Sgouros J.G."/>
            <person name="Peat N."/>
            <person name="Hayles J."/>
            <person name="Baker S.G."/>
            <person name="Basham D."/>
            <person name="Bowman S."/>
            <person name="Brooks K."/>
            <person name="Brown D."/>
            <person name="Brown S."/>
            <person name="Chillingworth T."/>
            <person name="Churcher C.M."/>
            <person name="Collins M."/>
            <person name="Connor R."/>
            <person name="Cronin A."/>
            <person name="Davis P."/>
            <person name="Feltwell T."/>
            <person name="Fraser A."/>
            <person name="Gentles S."/>
            <person name="Goble A."/>
            <person name="Hamlin N."/>
            <person name="Harris D.E."/>
            <person name="Hidalgo J."/>
            <person name="Hodgson G."/>
            <person name="Holroyd S."/>
            <person name="Hornsby T."/>
            <person name="Howarth S."/>
            <person name="Huckle E.J."/>
            <person name="Hunt S."/>
            <person name="Jagels K."/>
            <person name="James K.D."/>
            <person name="Jones L."/>
            <person name="Jones M."/>
            <person name="Leather S."/>
            <person name="McDonald S."/>
            <person name="McLean J."/>
            <person name="Mooney P."/>
            <person name="Moule S."/>
            <person name="Mungall K.L."/>
            <person name="Murphy L.D."/>
            <person name="Niblett D."/>
            <person name="Odell C."/>
            <person name="Oliver K."/>
            <person name="O'Neil S."/>
            <person name="Pearson D."/>
            <person name="Quail M.A."/>
            <person name="Rabbinowitsch E."/>
            <person name="Rutherford K.M."/>
            <person name="Rutter S."/>
            <person name="Saunders D."/>
            <person name="Seeger K."/>
            <person name="Sharp S."/>
            <person name="Skelton J."/>
            <person name="Simmonds M.N."/>
            <person name="Squares R."/>
            <person name="Squares S."/>
            <person name="Stevens K."/>
            <person name="Taylor K."/>
            <person name="Taylor R.G."/>
            <person name="Tivey A."/>
            <person name="Walsh S.V."/>
            <person name="Warren T."/>
            <person name="Whitehead S."/>
            <person name="Woodward J.R."/>
            <person name="Volckaert G."/>
            <person name="Aert R."/>
            <person name="Robben J."/>
            <person name="Grymonprez B."/>
            <person name="Weltjens I."/>
            <person name="Vanstreels E."/>
            <person name="Rieger M."/>
            <person name="Schaefer M."/>
            <person name="Mueller-Auer S."/>
            <person name="Gabel C."/>
            <person name="Fuchs M."/>
            <person name="Duesterhoeft A."/>
            <person name="Fritzc C."/>
            <person name="Holzer E."/>
            <person name="Moestl D."/>
            <person name="Hilbert H."/>
            <person name="Borzym K."/>
            <person name="Langer I."/>
            <person name="Beck A."/>
            <person name="Lehrach H."/>
            <person name="Reinhardt R."/>
            <person name="Pohl T.M."/>
            <person name="Eger P."/>
            <person name="Zimmermann W."/>
            <person name="Wedler H."/>
            <person name="Wambutt R."/>
            <person name="Purnelle B."/>
            <person name="Goffeau A."/>
            <person name="Cadieu E."/>
            <person name="Dreano S."/>
            <person name="Gloux S."/>
            <person name="Lelaure V."/>
            <person name="Mottier S."/>
            <person name="Galibert F."/>
            <person name="Aves S.J."/>
            <person name="Xiang Z."/>
            <person name="Hunt C."/>
            <person name="Moore K."/>
            <person name="Hurst S.M."/>
            <person name="Lucas M."/>
            <person name="Rochet M."/>
            <person name="Gaillardin C."/>
            <person name="Tallada V.A."/>
            <person name="Garzon A."/>
            <person name="Thode G."/>
            <person name="Daga R.R."/>
            <person name="Cruzado L."/>
            <person name="Jimenez J."/>
            <person name="Sanchez M."/>
            <person name="del Rey F."/>
            <person name="Benito J."/>
            <person name="Dominguez A."/>
            <person name="Revuelta J.L."/>
            <person name="Moreno S."/>
            <person name="Armstrong J."/>
            <person name="Forsburg S.L."/>
            <person name="Cerutti L."/>
            <person name="Lowe T."/>
            <person name="McCombie W.R."/>
            <person name="Paulsen I."/>
            <person name="Potashkin J."/>
            <person name="Shpakovski G.V."/>
            <person name="Ussery D."/>
            <person name="Barrell B.G."/>
            <person name="Nurse P."/>
        </authorList>
    </citation>
    <scope>NUCLEOTIDE SEQUENCE [LARGE SCALE GENOMIC DNA]</scope>
    <source>
        <strain>972 / ATCC 24843</strain>
    </source>
</reference>
<reference key="2">
    <citation type="journal article" date="2006" name="Nat. Biotechnol.">
        <title>ORFeome cloning and global analysis of protein localization in the fission yeast Schizosaccharomyces pombe.</title>
        <authorList>
            <person name="Matsuyama A."/>
            <person name="Arai R."/>
            <person name="Yashiroda Y."/>
            <person name="Shirai A."/>
            <person name="Kamata A."/>
            <person name="Sekido S."/>
            <person name="Kobayashi Y."/>
            <person name="Hashimoto A."/>
            <person name="Hamamoto M."/>
            <person name="Hiraoka Y."/>
            <person name="Horinouchi S."/>
            <person name="Yoshida M."/>
        </authorList>
    </citation>
    <scope>SUBCELLULAR LOCATION [LARGE SCALE ANALYSIS]</scope>
</reference>
<name>WSS1_SCHPO</name>
<accession>Q9P7B5</accession>
<accession>A0AAN2H635</accession>
<evidence type="ECO:0000250" key="1">
    <source>
        <dbReference type="UniProtKB" id="P38838"/>
    </source>
</evidence>
<evidence type="ECO:0000250" key="2">
    <source>
        <dbReference type="UniProtKB" id="Q9H040"/>
    </source>
</evidence>
<evidence type="ECO:0000255" key="3">
    <source>
        <dbReference type="PROSITE-ProRule" id="PRU00730"/>
    </source>
</evidence>
<evidence type="ECO:0000255" key="4">
    <source>
        <dbReference type="PROSITE-ProRule" id="PRU10095"/>
    </source>
</evidence>
<evidence type="ECO:0000256" key="5">
    <source>
        <dbReference type="SAM" id="MobiDB-lite"/>
    </source>
</evidence>
<evidence type="ECO:0000269" key="6">
    <source>
    </source>
</evidence>
<evidence type="ECO:0000305" key="7"/>
<evidence type="ECO:0000312" key="8">
    <source>
        <dbReference type="PomBase" id="SPAC521.02"/>
    </source>
</evidence>
<dbReference type="EC" id="3.4.24.-" evidence="1"/>
<dbReference type="EMBL" id="CU329670">
    <property type="protein sequence ID" value="CAK9837308.1"/>
    <property type="molecule type" value="Genomic_DNA"/>
</dbReference>
<dbReference type="RefSeq" id="NP_593097.1">
    <property type="nucleotide sequence ID" value="NM_001018494.2"/>
</dbReference>
<dbReference type="SMR" id="Q9P7B5"/>
<dbReference type="BioGRID" id="279888">
    <property type="interactions" value="3"/>
</dbReference>
<dbReference type="FunCoup" id="Q9P7B5">
    <property type="interactions" value="270"/>
</dbReference>
<dbReference type="STRING" id="284812.Q9P7B5"/>
<dbReference type="MEROPS" id="M80.A03"/>
<dbReference type="PaxDb" id="4896-SPAC521.02.1"/>
<dbReference type="EnsemblFungi" id="SPAC521.02.1">
    <property type="protein sequence ID" value="SPAC521.02.1:pep"/>
    <property type="gene ID" value="SPAC521.02"/>
</dbReference>
<dbReference type="GeneID" id="2543468"/>
<dbReference type="KEGG" id="spo:2543468"/>
<dbReference type="PomBase" id="SPAC521.02">
    <property type="gene designation" value="wss1"/>
</dbReference>
<dbReference type="VEuPathDB" id="FungiDB:SPAC521.02"/>
<dbReference type="eggNOG" id="KOG4842">
    <property type="taxonomic scope" value="Eukaryota"/>
</dbReference>
<dbReference type="HOGENOM" id="CLU_1058290_0_0_1"/>
<dbReference type="InParanoid" id="Q9P7B5"/>
<dbReference type="OMA" id="YMTWDSF"/>
<dbReference type="PhylomeDB" id="Q9P7B5"/>
<dbReference type="PRO" id="PR:Q9P7B5"/>
<dbReference type="Proteomes" id="UP000002485">
    <property type="component" value="Chromosome I"/>
</dbReference>
<dbReference type="GO" id="GO:0005634">
    <property type="term" value="C:nucleus"/>
    <property type="evidence" value="ECO:0007005"/>
    <property type="project" value="PomBase"/>
</dbReference>
<dbReference type="GO" id="GO:0004222">
    <property type="term" value="F:metalloendopeptidase activity"/>
    <property type="evidence" value="ECO:0000266"/>
    <property type="project" value="PomBase"/>
</dbReference>
<dbReference type="GO" id="GO:0008237">
    <property type="term" value="F:metallopeptidase activity"/>
    <property type="evidence" value="ECO:0000318"/>
    <property type="project" value="GO_Central"/>
</dbReference>
<dbReference type="GO" id="GO:0008270">
    <property type="term" value="F:zinc ion binding"/>
    <property type="evidence" value="ECO:0000255"/>
    <property type="project" value="PomBase"/>
</dbReference>
<dbReference type="GO" id="GO:0006281">
    <property type="term" value="P:DNA repair"/>
    <property type="evidence" value="ECO:0000318"/>
    <property type="project" value="GO_Central"/>
</dbReference>
<dbReference type="GO" id="GO:0106300">
    <property type="term" value="P:protein-DNA covalent cross-linking repair"/>
    <property type="evidence" value="ECO:0000266"/>
    <property type="project" value="PomBase"/>
</dbReference>
<dbReference type="GO" id="GO:0006508">
    <property type="term" value="P:proteolysis"/>
    <property type="evidence" value="ECO:0007669"/>
    <property type="project" value="UniProtKB-KW"/>
</dbReference>
<dbReference type="GO" id="GO:0019985">
    <property type="term" value="P:translesion synthesis"/>
    <property type="evidence" value="ECO:0000266"/>
    <property type="project" value="PomBase"/>
</dbReference>
<dbReference type="InterPro" id="IPR013536">
    <property type="entry name" value="WLM_dom"/>
</dbReference>
<dbReference type="InterPro" id="IPR053000">
    <property type="entry name" value="WSS1-like_metalloprotease"/>
</dbReference>
<dbReference type="PANTHER" id="PTHR46622">
    <property type="entry name" value="DNA-DEPENDENT METALLOPROTEASE WSS1"/>
    <property type="match status" value="1"/>
</dbReference>
<dbReference type="PANTHER" id="PTHR46622:SF1">
    <property type="entry name" value="DNA-DEPENDENT METALLOPROTEASE WSS1"/>
    <property type="match status" value="1"/>
</dbReference>
<dbReference type="Pfam" id="PF08325">
    <property type="entry name" value="WLM"/>
    <property type="match status" value="1"/>
</dbReference>
<dbReference type="PROSITE" id="PS51397">
    <property type="entry name" value="WLM"/>
    <property type="match status" value="1"/>
</dbReference>
<dbReference type="PROSITE" id="PS00142">
    <property type="entry name" value="ZINC_PROTEASE"/>
    <property type="match status" value="1"/>
</dbReference>
<proteinExistence type="inferred from homology"/>
<keyword id="KW-0227">DNA damage</keyword>
<keyword id="KW-0378">Hydrolase</keyword>
<keyword id="KW-0479">Metal-binding</keyword>
<keyword id="KW-0482">Metalloprotease</keyword>
<keyword id="KW-0539">Nucleus</keyword>
<keyword id="KW-0645">Protease</keyword>
<keyword id="KW-1185">Reference proteome</keyword>
<keyword id="KW-0862">Zinc</keyword>
<sequence length="262" mass="29939">MLRINDDDHPNEKIGFISAIKGDFHDLSSDYLKRIAAMAFPIMKEHGFGVTSLDEVAYNAKFWGRNWNKGECIELVLRDASNRWLPFEFVMDVFLHELCHIWQGPHDRRFFSHLSTLRAALIALYAKGYKGPGKYMTWDSFVLANVVGNYNTVVFNGITLERSTMHGVETCGGSLQRKKKIRRKPTPSSTKKRKLTRTGQKLGTDMNIRLELLKSPAKPQAQSMRGREARIAAALLRVDNSNEYKPKDHNSSTTLENYFVVE</sequence>
<comment type="function">
    <text evidence="1">Metalloendopeptidase that acts selectively on DNA-binding proteins. DNA is needed to bring the protease and substrates together to enable proteolysis. Involved in the repair of toxic DNA-protein cross-links (DPCs) such as covalently trapped topoisomerase 1 (top1) adducts on DNA lesions or DPCs induced by reactive compounds such as formaldehyde. Involved in DNA damage response and processing of stalled or collapsed replication forks by removing the covalently trapped top1 from chromatin. DPC proteolysis enables the repair of the lesions via downstream DNA repair pathways. May be recruited to DPCs via the SUMOylation of substrate proteins at damaged DNA sites (By similarity).</text>
</comment>
<comment type="cofactor">
    <cofactor evidence="2">
        <name>Zn(2+)</name>
        <dbReference type="ChEBI" id="CHEBI:29105"/>
    </cofactor>
</comment>
<comment type="subunit">
    <text evidence="1">Binds to DNA. Interacts with pmt3/smt3.</text>
</comment>
<comment type="subcellular location">
    <subcellularLocation>
        <location evidence="6">Nucleus</location>
    </subcellularLocation>
</comment>
<comment type="domain">
    <text evidence="1">The SUMO interaction motif (SIM) is important for binding to pmt3/smt3 (SUMO).</text>
</comment>
<comment type="similarity">
    <text evidence="7">Belongs to the peptidase M3 family. WSS1-like metalloprotease (WLM) subfamily.</text>
</comment>
<gene>
    <name type="primary">wss1</name>
    <name evidence="8" type="ORF">SPAC521.02</name>
</gene>
<organism>
    <name type="scientific">Schizosaccharomyces pombe (strain 972 / ATCC 24843)</name>
    <name type="common">Fission yeast</name>
    <dbReference type="NCBI Taxonomy" id="284812"/>
    <lineage>
        <taxon>Eukaryota</taxon>
        <taxon>Fungi</taxon>
        <taxon>Dikarya</taxon>
        <taxon>Ascomycota</taxon>
        <taxon>Taphrinomycotina</taxon>
        <taxon>Schizosaccharomycetes</taxon>
        <taxon>Schizosaccharomycetales</taxon>
        <taxon>Schizosaccharomycetaceae</taxon>
        <taxon>Schizosaccharomyces</taxon>
    </lineage>
</organism>
<feature type="chain" id="PRO_0000351446" description="DNA-dependent metalloprotease WSS1 homolog">
    <location>
        <begin position="1"/>
        <end position="262"/>
    </location>
</feature>
<feature type="domain" description="WLM" evidence="3">
    <location>
        <begin position="8"/>
        <end position="195"/>
    </location>
</feature>
<feature type="region of interest" description="Disordered" evidence="5">
    <location>
        <begin position="178"/>
        <end position="199"/>
    </location>
</feature>
<feature type="short sequence motif" description="SUMO interaction motif (SIM)" evidence="1">
    <location>
        <begin position="235"/>
        <end position="242"/>
    </location>
</feature>
<feature type="compositionally biased region" description="Basic residues" evidence="5">
    <location>
        <begin position="178"/>
        <end position="196"/>
    </location>
</feature>
<feature type="active site" evidence="4">
    <location>
        <position position="97"/>
    </location>
</feature>
<feature type="binding site" evidence="4">
    <location>
        <position position="96"/>
    </location>
    <ligand>
        <name>Zn(2+)</name>
        <dbReference type="ChEBI" id="CHEBI:29105"/>
        <note>catalytic</note>
    </ligand>
</feature>
<feature type="binding site" evidence="4">
    <location>
        <position position="100"/>
    </location>
    <ligand>
        <name>Zn(2+)</name>
        <dbReference type="ChEBI" id="CHEBI:29105"/>
        <note>catalytic</note>
    </ligand>
</feature>
<feature type="binding site" evidence="4">
    <location>
        <position position="106"/>
    </location>
    <ligand>
        <name>Zn(2+)</name>
        <dbReference type="ChEBI" id="CHEBI:29105"/>
        <note>catalytic</note>
    </ligand>
</feature>
<protein>
    <recommendedName>
        <fullName>DNA-dependent metalloprotease WSS1 homolog</fullName>
        <ecNumber evidence="1">3.4.24.-</ecNumber>
    </recommendedName>
    <alternativeName>
        <fullName>DNA damage response protein WSS1 homolog</fullName>
    </alternativeName>
</protein>